<keyword id="KW-0328">Glycosyltransferase</keyword>
<keyword id="KW-0448">Lipopolysaccharide biosynthesis</keyword>
<keyword id="KW-0808">Transferase</keyword>
<protein>
    <recommendedName>
        <fullName>Probable glycosyltransferase WbjE</fullName>
        <ecNumber>2.4.-.-</ecNumber>
    </recommendedName>
</protein>
<name>WBJE_PSEAI</name>
<organism>
    <name type="scientific">Pseudomonas aeruginosa</name>
    <dbReference type="NCBI Taxonomy" id="287"/>
    <lineage>
        <taxon>Bacteria</taxon>
        <taxon>Pseudomonadati</taxon>
        <taxon>Pseudomonadota</taxon>
        <taxon>Gammaproteobacteria</taxon>
        <taxon>Pseudomonadales</taxon>
        <taxon>Pseudomonadaceae</taxon>
        <taxon>Pseudomonas</taxon>
    </lineage>
</organism>
<feature type="chain" id="PRO_0000080313" description="Probable glycosyltransferase WbjE">
    <location>
        <begin position="1"/>
        <end position="400"/>
    </location>
</feature>
<feature type="sequence variant" description="In strain: PA011 and PA103.">
    <original>D</original>
    <variation>E</variation>
    <location>
        <position position="56"/>
    </location>
</feature>
<feature type="sequence variant" description="In strain: PA011.">
    <original>N</original>
    <variation>S</variation>
    <location>
        <position position="342"/>
    </location>
</feature>
<proteinExistence type="inferred from homology"/>
<accession>Q8KIU8</accession>
<accession>Q9KIC8</accession>
<accession>Q9XC58</accession>
<evidence type="ECO:0000305" key="1"/>
<comment type="pathway">
    <text>Bacterial outer membrane biogenesis; LPS O-antigen biosynthesis.</text>
</comment>
<comment type="miscellaneous">
    <text>The O-antigen locus is highly variable and differs considerably between different serogroups of Pseudomonas aeruginosa.</text>
</comment>
<comment type="similarity">
    <text evidence="1">Belongs to the glycosyltransferase group 1 family. Glycosyltransferase 4 subfamily.</text>
</comment>
<reference key="1">
    <citation type="journal article" date="1999" name="J. Bacteriol.">
        <title>Characterization of the serogroup O11 O-antigen locus of Pseudomonas aeruginosa PA103.</title>
        <authorList>
            <person name="Dean C.R."/>
            <person name="Franklund C.V."/>
            <person name="Retief J.D."/>
            <person name="Coyne M.J. Jr."/>
            <person name="Hatano K."/>
            <person name="Evans D.J."/>
            <person name="Pier G.B."/>
            <person name="Goldberg J.B."/>
        </authorList>
    </citation>
    <scope>NUCLEOTIDE SEQUENCE [GENOMIC DNA]</scope>
    <source>
        <strain>ATCC 29260 / PA103</strain>
    </source>
</reference>
<reference key="2">
    <citation type="journal article" date="2000" name="FEMS Microbiol. Lett.">
        <title>The wbpM gene in Pseudomonas aeruginosa serogroup O17 resides on a cryptic copy of the serogroup O11 O antigen gene locus.</title>
        <authorList>
            <person name="Dean C.R."/>
            <person name="Goldberg J.B."/>
        </authorList>
    </citation>
    <scope>NUCLEOTIDE SEQUENCE [GENOMIC DNA]</scope>
    <source>
        <strain>PAO17</strain>
    </source>
</reference>
<reference key="3">
    <citation type="journal article" date="2002" name="J. Bacteriol.">
        <title>Genetic variation at the O-antigen biosynthetic locus in Pseudomonas aeruginosa.</title>
        <authorList>
            <person name="Raymond C.K."/>
            <person name="Sims E.H."/>
            <person name="Kas A."/>
            <person name="Spencer D.H."/>
            <person name="Kutyavin T.V."/>
            <person name="Ivey R.G."/>
            <person name="Zhou Y."/>
            <person name="Kaul R."/>
            <person name="Clendenning J.B."/>
            <person name="Olson M.V."/>
        </authorList>
    </citation>
    <scope>NUCLEOTIDE SEQUENCE [GENOMIC DNA]</scope>
    <source>
        <strain>PAO11</strain>
        <strain>PAO17</strain>
    </source>
</reference>
<gene>
    <name type="primary">wbjE</name>
</gene>
<dbReference type="EC" id="2.4.-.-"/>
<dbReference type="EMBL" id="AF147795">
    <property type="protein sequence ID" value="AAD45268.1"/>
    <property type="molecule type" value="Genomic_DNA"/>
</dbReference>
<dbReference type="EMBL" id="AF236052">
    <property type="protein sequence ID" value="AAF72957.1"/>
    <property type="molecule type" value="Genomic_DNA"/>
</dbReference>
<dbReference type="EMBL" id="AF498402">
    <property type="protein sequence ID" value="AAM27578.1"/>
    <property type="molecule type" value="Genomic_DNA"/>
</dbReference>
<dbReference type="EMBL" id="AF498409">
    <property type="protein sequence ID" value="AAM27680.1"/>
    <property type="molecule type" value="Genomic_DNA"/>
</dbReference>
<dbReference type="RefSeq" id="WP_023100915.1">
    <property type="nucleotide sequence ID" value="NZ_WOAS01000002.1"/>
</dbReference>
<dbReference type="RefSeq" id="WP_071535098.1">
    <property type="nucleotide sequence ID" value="NZ_WWCE01000008.1"/>
</dbReference>
<dbReference type="SMR" id="Q8KIU8"/>
<dbReference type="CAZy" id="GT4">
    <property type="family name" value="Glycosyltransferase Family 4"/>
</dbReference>
<dbReference type="UniPathway" id="UPA00281"/>
<dbReference type="GO" id="GO:0016757">
    <property type="term" value="F:glycosyltransferase activity"/>
    <property type="evidence" value="ECO:0007669"/>
    <property type="project" value="UniProtKB-KW"/>
</dbReference>
<dbReference type="GO" id="GO:0009243">
    <property type="term" value="P:O antigen biosynthetic process"/>
    <property type="evidence" value="ECO:0007669"/>
    <property type="project" value="UniProtKB-UniPathway"/>
</dbReference>
<dbReference type="CDD" id="cd03794">
    <property type="entry name" value="GT4_WbuB-like"/>
    <property type="match status" value="1"/>
</dbReference>
<dbReference type="Gene3D" id="3.40.50.2000">
    <property type="entry name" value="Glycogen Phosphorylase B"/>
    <property type="match status" value="2"/>
</dbReference>
<dbReference type="InterPro" id="IPR028098">
    <property type="entry name" value="Glyco_trans_4-like_N"/>
</dbReference>
<dbReference type="PANTHER" id="PTHR46401">
    <property type="entry name" value="GLYCOSYLTRANSFERASE WBBK-RELATED"/>
    <property type="match status" value="1"/>
</dbReference>
<dbReference type="PANTHER" id="PTHR46401:SF2">
    <property type="entry name" value="GLYCOSYLTRANSFERASE WBBK-RELATED"/>
    <property type="match status" value="1"/>
</dbReference>
<dbReference type="Pfam" id="PF13692">
    <property type="entry name" value="Glyco_trans_1_4"/>
    <property type="match status" value="1"/>
</dbReference>
<dbReference type="Pfam" id="PF13579">
    <property type="entry name" value="Glyco_trans_4_4"/>
    <property type="match status" value="1"/>
</dbReference>
<dbReference type="SUPFAM" id="SSF53756">
    <property type="entry name" value="UDP-Glycosyltransferase/glycogen phosphorylase"/>
    <property type="match status" value="1"/>
</dbReference>
<sequence>MARIFVVSEYVGANQNSTGYYWEKIIGKMQREFGGLTVIFPLTAGETPPVVSPSVDQECFKFPRSNKNRLLSRGLAQIFQAFLFSVKLTSRARRGDVVLSGTNPALLLMTFPLLRYALGFKWVLLVHDVFPENLVPAGVLKKDSIAYRLLRRLFSFIYSSADRLVVIGRDMEALMKEKVNDPRSLVFISNWACEKEVFPVPREDAPFINIPEWKGKRVFQFFGNVGRLQGIENILSAIQLVKNEKAAFAFIGDGALVDSVKKHALEDQCARLRYFGRLPLAEKNFGLAACDVALVTLEEGMFGLGVPSKAYFSMAADKPILAVMEKGAEISRIIDETGIGWNCPPNDPVALARLIDEICELDLSSLGGVPRSVLQQNYSEYISLEKFAACVRPLLSESKI</sequence>